<feature type="chain" id="PRO_0000138956" description="Fructose-bisphosphate aldolase class 1">
    <location>
        <begin position="1"/>
        <end position="263"/>
    </location>
</feature>
<feature type="active site" description="Schiff-base intermediate with substrate" evidence="1">
    <location>
        <position position="177"/>
    </location>
</feature>
<proteinExistence type="inferred from homology"/>
<organism>
    <name type="scientific">Halobacterium salinarum (strain ATCC 700922 / JCM 11081 / NRC-1)</name>
    <name type="common">Halobacterium halobium</name>
    <dbReference type="NCBI Taxonomy" id="64091"/>
    <lineage>
        <taxon>Archaea</taxon>
        <taxon>Methanobacteriati</taxon>
        <taxon>Methanobacteriota</taxon>
        <taxon>Stenosarchaea group</taxon>
        <taxon>Halobacteria</taxon>
        <taxon>Halobacteriales</taxon>
        <taxon>Halobacteriaceae</taxon>
        <taxon>Halobacterium</taxon>
        <taxon>Halobacterium salinarum NRC-34001</taxon>
    </lineage>
</organism>
<protein>
    <recommendedName>
        <fullName evidence="2">Fructose-bisphosphate aldolase class 1</fullName>
        <ecNumber evidence="2">4.1.2.13</ecNumber>
    </recommendedName>
    <alternativeName>
        <fullName evidence="2">Fructose-bisphosphate aldolase class I</fullName>
        <shortName evidence="2">FBP aldolase</shortName>
    </alternativeName>
</protein>
<comment type="function">
    <text evidence="2">Has aldolase activity with fructose 1,6-bisphosphate. May play a role in the biosynthesis of aromatic amino acids (AroAA).</text>
</comment>
<comment type="catalytic activity">
    <reaction evidence="2">
        <text>beta-D-fructose 1,6-bisphosphate = D-glyceraldehyde 3-phosphate + dihydroxyacetone phosphate</text>
        <dbReference type="Rhea" id="RHEA:14729"/>
        <dbReference type="ChEBI" id="CHEBI:32966"/>
        <dbReference type="ChEBI" id="CHEBI:57642"/>
        <dbReference type="ChEBI" id="CHEBI:59776"/>
        <dbReference type="EC" id="4.1.2.13"/>
    </reaction>
</comment>
<comment type="similarity">
    <text evidence="3">Belongs to the DeoC/FbaB aldolase family.</text>
</comment>
<sequence>MRPFEDSPISRDGKVLILAYDHGLEHGPVDFEAVPATKDPEAVWDVATHDAVSAMAAQKGIAEAYYPSYSDDVNLLAKLNGTSNLWMGEPDSAVNWTVDYAADVGADAVGFTLYGGSNSEVEMAEEFRDAQEAARDHDLPVVMWSYPRGQGLKNDKNPDTIAYAARQALELGADIAKVKYPGSTDAMSHAVDMAGPTNVVMSGGSKTSDRDFLESVKGAIDAGASGLAVGRNVWQREHPAAFLDGLEAVVYEEASVDEALGRI</sequence>
<gene>
    <name type="ordered locus">VNG_0683C</name>
</gene>
<evidence type="ECO:0000250" key="1"/>
<evidence type="ECO:0000250" key="2">
    <source>
        <dbReference type="UniProtKB" id="B0R3Y0"/>
    </source>
</evidence>
<evidence type="ECO:0000305" key="3"/>
<keyword id="KW-0324">Glycolysis</keyword>
<keyword id="KW-0456">Lyase</keyword>
<keyword id="KW-1185">Reference proteome</keyword>
<keyword id="KW-0704">Schiff base</keyword>
<reference key="1">
    <citation type="journal article" date="2000" name="Proc. Natl. Acad. Sci. U.S.A.">
        <title>Genome sequence of Halobacterium species NRC-1.</title>
        <authorList>
            <person name="Ng W.V."/>
            <person name="Kennedy S.P."/>
            <person name="Mahairas G.G."/>
            <person name="Berquist B."/>
            <person name="Pan M."/>
            <person name="Shukla H.D."/>
            <person name="Lasky S.R."/>
            <person name="Baliga N.S."/>
            <person name="Thorsson V."/>
            <person name="Sbrogna J."/>
            <person name="Swartzell S."/>
            <person name="Weir D."/>
            <person name="Hall J."/>
            <person name="Dahl T.A."/>
            <person name="Welti R."/>
            <person name="Goo Y.A."/>
            <person name="Leithauser B."/>
            <person name="Keller K."/>
            <person name="Cruz R."/>
            <person name="Danson M.J."/>
            <person name="Hough D.W."/>
            <person name="Maddocks D.G."/>
            <person name="Jablonski P.E."/>
            <person name="Krebs M.P."/>
            <person name="Angevine C.M."/>
            <person name="Dale H."/>
            <person name="Isenbarger T.A."/>
            <person name="Peck R.F."/>
            <person name="Pohlschroder M."/>
            <person name="Spudich J.L."/>
            <person name="Jung K.-H."/>
            <person name="Alam M."/>
            <person name="Freitas T."/>
            <person name="Hou S."/>
            <person name="Daniels C.J."/>
            <person name="Dennis P.P."/>
            <person name="Omer A.D."/>
            <person name="Ebhardt H."/>
            <person name="Lowe T.M."/>
            <person name="Liang P."/>
            <person name="Riley M."/>
            <person name="Hood L."/>
            <person name="DasSarma S."/>
        </authorList>
    </citation>
    <scope>NUCLEOTIDE SEQUENCE [LARGE SCALE GENOMIC DNA]</scope>
    <source>
        <strain>ATCC 700922 / JCM 11081 / NRC-1</strain>
    </source>
</reference>
<accession>Q9HRI2</accession>
<name>ALF1_HALSA</name>
<dbReference type="EC" id="4.1.2.13" evidence="2"/>
<dbReference type="EMBL" id="AE004437">
    <property type="protein sequence ID" value="AAG19176.1"/>
    <property type="molecule type" value="Genomic_DNA"/>
</dbReference>
<dbReference type="PIR" id="D84226">
    <property type="entry name" value="D84226"/>
</dbReference>
<dbReference type="SMR" id="Q9HRI2"/>
<dbReference type="STRING" id="64091.VNG_0683C"/>
<dbReference type="PaxDb" id="64091-VNG_0683C"/>
<dbReference type="KEGG" id="hal:VNG_0683C"/>
<dbReference type="PATRIC" id="fig|64091.14.peg.524"/>
<dbReference type="HOGENOM" id="CLU_057069_2_2_2"/>
<dbReference type="InParanoid" id="Q9HRI2"/>
<dbReference type="OrthoDB" id="6329at2157"/>
<dbReference type="PhylomeDB" id="Q9HRI2"/>
<dbReference type="Proteomes" id="UP000000554">
    <property type="component" value="Chromosome"/>
</dbReference>
<dbReference type="GO" id="GO:0016747">
    <property type="term" value="F:acyltransferase activity, transferring groups other than amino-acyl groups"/>
    <property type="evidence" value="ECO:0000318"/>
    <property type="project" value="GO_Central"/>
</dbReference>
<dbReference type="GO" id="GO:0004332">
    <property type="term" value="F:fructose-bisphosphate aldolase activity"/>
    <property type="evidence" value="ECO:0000250"/>
    <property type="project" value="UniProtKB"/>
</dbReference>
<dbReference type="GO" id="GO:0009073">
    <property type="term" value="P:aromatic amino acid family biosynthetic process"/>
    <property type="evidence" value="ECO:0000250"/>
    <property type="project" value="UniProtKB"/>
</dbReference>
<dbReference type="GO" id="GO:0006096">
    <property type="term" value="P:glycolytic process"/>
    <property type="evidence" value="ECO:0007669"/>
    <property type="project" value="UniProtKB-KW"/>
</dbReference>
<dbReference type="CDD" id="cd00958">
    <property type="entry name" value="DhnA"/>
    <property type="match status" value="1"/>
</dbReference>
<dbReference type="Gene3D" id="3.20.20.70">
    <property type="entry name" value="Aldolase class I"/>
    <property type="match status" value="1"/>
</dbReference>
<dbReference type="InterPro" id="IPR013785">
    <property type="entry name" value="Aldolase_TIM"/>
</dbReference>
<dbReference type="InterPro" id="IPR002915">
    <property type="entry name" value="DeoC/FbaB/LacD_aldolase"/>
</dbReference>
<dbReference type="InterPro" id="IPR050456">
    <property type="entry name" value="DeoC/FbaB_aldolase"/>
</dbReference>
<dbReference type="InterPro" id="IPR041720">
    <property type="entry name" value="FbaB-like"/>
</dbReference>
<dbReference type="PANTHER" id="PTHR47916:SF1">
    <property type="entry name" value="3-HYDROXY-5-PHOSPHONOOXYPENTANE-2,4-DIONE THIOLASE"/>
    <property type="match status" value="1"/>
</dbReference>
<dbReference type="PANTHER" id="PTHR47916">
    <property type="entry name" value="FRUCTOSE-BISPHOSPHATE ALDOLASE CLASS 1"/>
    <property type="match status" value="1"/>
</dbReference>
<dbReference type="Pfam" id="PF01791">
    <property type="entry name" value="DeoC"/>
    <property type="match status" value="1"/>
</dbReference>
<dbReference type="PIRSF" id="PIRSF038992">
    <property type="entry name" value="Aldolase_Ia"/>
    <property type="match status" value="1"/>
</dbReference>
<dbReference type="SMART" id="SM01133">
    <property type="entry name" value="DeoC"/>
    <property type="match status" value="1"/>
</dbReference>
<dbReference type="SUPFAM" id="SSF51569">
    <property type="entry name" value="Aldolase"/>
    <property type="match status" value="1"/>
</dbReference>